<sequence>MALTLADVDKIARLSRLHLTAAEKEKSLQELNDIFAMVEQMQNINTDGIEPMAHPHEAALRLREDEVTETDRAAEYQAVAPEVRNRLYIVPQVIEE</sequence>
<dbReference type="EC" id="6.3.5.-" evidence="1"/>
<dbReference type="EMBL" id="AL157959">
    <property type="protein sequence ID" value="CAM08712.1"/>
    <property type="molecule type" value="Genomic_DNA"/>
</dbReference>
<dbReference type="PIR" id="B81849">
    <property type="entry name" value="B81849"/>
</dbReference>
<dbReference type="RefSeq" id="WP_002217010.1">
    <property type="nucleotide sequence ID" value="NC_003116.1"/>
</dbReference>
<dbReference type="SMR" id="Q9JTZ6"/>
<dbReference type="DNASU" id="907955"/>
<dbReference type="EnsemblBacteria" id="CAM08712">
    <property type="protein sequence ID" value="CAM08712"/>
    <property type="gene ID" value="NMA1567"/>
</dbReference>
<dbReference type="GeneID" id="93385846"/>
<dbReference type="KEGG" id="nma:NMA1567"/>
<dbReference type="HOGENOM" id="CLU_105899_2_2_4"/>
<dbReference type="Proteomes" id="UP000000626">
    <property type="component" value="Chromosome"/>
</dbReference>
<dbReference type="GO" id="GO:0050566">
    <property type="term" value="F:asparaginyl-tRNA synthase (glutamine-hydrolyzing) activity"/>
    <property type="evidence" value="ECO:0007669"/>
    <property type="project" value="RHEA"/>
</dbReference>
<dbReference type="GO" id="GO:0005524">
    <property type="term" value="F:ATP binding"/>
    <property type="evidence" value="ECO:0007669"/>
    <property type="project" value="UniProtKB-KW"/>
</dbReference>
<dbReference type="GO" id="GO:0050567">
    <property type="term" value="F:glutaminyl-tRNA synthase (glutamine-hydrolyzing) activity"/>
    <property type="evidence" value="ECO:0007669"/>
    <property type="project" value="UniProtKB-UniRule"/>
</dbReference>
<dbReference type="GO" id="GO:0070681">
    <property type="term" value="P:glutaminyl-tRNAGln biosynthesis via transamidation"/>
    <property type="evidence" value="ECO:0007669"/>
    <property type="project" value="TreeGrafter"/>
</dbReference>
<dbReference type="GO" id="GO:0006450">
    <property type="term" value="P:regulation of translational fidelity"/>
    <property type="evidence" value="ECO:0007669"/>
    <property type="project" value="InterPro"/>
</dbReference>
<dbReference type="GO" id="GO:0006412">
    <property type="term" value="P:translation"/>
    <property type="evidence" value="ECO:0007669"/>
    <property type="project" value="UniProtKB-UniRule"/>
</dbReference>
<dbReference type="Gene3D" id="1.10.20.60">
    <property type="entry name" value="Glu-tRNAGln amidotransferase C subunit, N-terminal domain"/>
    <property type="match status" value="1"/>
</dbReference>
<dbReference type="HAMAP" id="MF_00122">
    <property type="entry name" value="GatC"/>
    <property type="match status" value="1"/>
</dbReference>
<dbReference type="InterPro" id="IPR036113">
    <property type="entry name" value="Asp/Glu-ADT_sf_sub_c"/>
</dbReference>
<dbReference type="InterPro" id="IPR003837">
    <property type="entry name" value="GatC"/>
</dbReference>
<dbReference type="NCBIfam" id="TIGR00135">
    <property type="entry name" value="gatC"/>
    <property type="match status" value="1"/>
</dbReference>
<dbReference type="PANTHER" id="PTHR15004">
    <property type="entry name" value="GLUTAMYL-TRNA(GLN) AMIDOTRANSFERASE SUBUNIT C, MITOCHONDRIAL"/>
    <property type="match status" value="1"/>
</dbReference>
<dbReference type="PANTHER" id="PTHR15004:SF0">
    <property type="entry name" value="GLUTAMYL-TRNA(GLN) AMIDOTRANSFERASE SUBUNIT C, MITOCHONDRIAL"/>
    <property type="match status" value="1"/>
</dbReference>
<dbReference type="Pfam" id="PF02686">
    <property type="entry name" value="GatC"/>
    <property type="match status" value="1"/>
</dbReference>
<dbReference type="SUPFAM" id="SSF141000">
    <property type="entry name" value="Glu-tRNAGln amidotransferase C subunit"/>
    <property type="match status" value="1"/>
</dbReference>
<gene>
    <name evidence="1" type="primary">gatC</name>
    <name type="ordered locus">NMA1567</name>
</gene>
<reference key="1">
    <citation type="journal article" date="2000" name="Nature">
        <title>Complete DNA sequence of a serogroup A strain of Neisseria meningitidis Z2491.</title>
        <authorList>
            <person name="Parkhill J."/>
            <person name="Achtman M."/>
            <person name="James K.D."/>
            <person name="Bentley S.D."/>
            <person name="Churcher C.M."/>
            <person name="Klee S.R."/>
            <person name="Morelli G."/>
            <person name="Basham D."/>
            <person name="Brown D."/>
            <person name="Chillingworth T."/>
            <person name="Davies R.M."/>
            <person name="Davis P."/>
            <person name="Devlin K."/>
            <person name="Feltwell T."/>
            <person name="Hamlin N."/>
            <person name="Holroyd S."/>
            <person name="Jagels K."/>
            <person name="Leather S."/>
            <person name="Moule S."/>
            <person name="Mungall K.L."/>
            <person name="Quail M.A."/>
            <person name="Rajandream M.A."/>
            <person name="Rutherford K.M."/>
            <person name="Simmonds M."/>
            <person name="Skelton J."/>
            <person name="Whitehead S."/>
            <person name="Spratt B.G."/>
            <person name="Barrell B.G."/>
        </authorList>
    </citation>
    <scope>NUCLEOTIDE SEQUENCE [LARGE SCALE GENOMIC DNA]</scope>
    <source>
        <strain>DSM 15465 / Z2491</strain>
    </source>
</reference>
<name>GATC_NEIMA</name>
<protein>
    <recommendedName>
        <fullName>Glutamyl-tRNA(Gln) amidotransferase subunit C</fullName>
        <shortName>Glu-ADT subunit C</shortName>
        <ecNumber evidence="1">6.3.5.-</ecNumber>
    </recommendedName>
</protein>
<accession>Q9JTZ6</accession>
<accession>A1ISF6</accession>
<comment type="function">
    <text evidence="1">Allows the formation of correctly charged Asn-tRNA(Asn) or Gln-tRNA(Gln) through the transamidation of misacylated Asp-tRNA(Asn) or Glu-tRNA(Gln) in organisms which lack either or both of asparaginyl-tRNA or glutaminyl-tRNA synthetases. The reaction takes place in the presence of glutamine and ATP through an activated phospho-Asp-tRNA(Asn) or phospho-Glu-tRNA(Gln).</text>
</comment>
<comment type="catalytic activity">
    <reaction evidence="1">
        <text>L-glutamyl-tRNA(Gln) + L-glutamine + ATP + H2O = L-glutaminyl-tRNA(Gln) + L-glutamate + ADP + phosphate + H(+)</text>
        <dbReference type="Rhea" id="RHEA:17521"/>
        <dbReference type="Rhea" id="RHEA-COMP:9681"/>
        <dbReference type="Rhea" id="RHEA-COMP:9684"/>
        <dbReference type="ChEBI" id="CHEBI:15377"/>
        <dbReference type="ChEBI" id="CHEBI:15378"/>
        <dbReference type="ChEBI" id="CHEBI:29985"/>
        <dbReference type="ChEBI" id="CHEBI:30616"/>
        <dbReference type="ChEBI" id="CHEBI:43474"/>
        <dbReference type="ChEBI" id="CHEBI:58359"/>
        <dbReference type="ChEBI" id="CHEBI:78520"/>
        <dbReference type="ChEBI" id="CHEBI:78521"/>
        <dbReference type="ChEBI" id="CHEBI:456216"/>
    </reaction>
</comment>
<comment type="catalytic activity">
    <reaction evidence="1">
        <text>L-aspartyl-tRNA(Asn) + L-glutamine + ATP + H2O = L-asparaginyl-tRNA(Asn) + L-glutamate + ADP + phosphate + 2 H(+)</text>
        <dbReference type="Rhea" id="RHEA:14513"/>
        <dbReference type="Rhea" id="RHEA-COMP:9674"/>
        <dbReference type="Rhea" id="RHEA-COMP:9677"/>
        <dbReference type="ChEBI" id="CHEBI:15377"/>
        <dbReference type="ChEBI" id="CHEBI:15378"/>
        <dbReference type="ChEBI" id="CHEBI:29985"/>
        <dbReference type="ChEBI" id="CHEBI:30616"/>
        <dbReference type="ChEBI" id="CHEBI:43474"/>
        <dbReference type="ChEBI" id="CHEBI:58359"/>
        <dbReference type="ChEBI" id="CHEBI:78515"/>
        <dbReference type="ChEBI" id="CHEBI:78516"/>
        <dbReference type="ChEBI" id="CHEBI:456216"/>
    </reaction>
</comment>
<comment type="subunit">
    <text evidence="1">Heterotrimer of A, B and C subunits.</text>
</comment>
<comment type="similarity">
    <text evidence="1">Belongs to the GatC family.</text>
</comment>
<proteinExistence type="inferred from homology"/>
<organism>
    <name type="scientific">Neisseria meningitidis serogroup A / serotype 4A (strain DSM 15465 / Z2491)</name>
    <dbReference type="NCBI Taxonomy" id="122587"/>
    <lineage>
        <taxon>Bacteria</taxon>
        <taxon>Pseudomonadati</taxon>
        <taxon>Pseudomonadota</taxon>
        <taxon>Betaproteobacteria</taxon>
        <taxon>Neisseriales</taxon>
        <taxon>Neisseriaceae</taxon>
        <taxon>Neisseria</taxon>
    </lineage>
</organism>
<feature type="chain" id="PRO_0000105314" description="Glutamyl-tRNA(Gln) amidotransferase subunit C">
    <location>
        <begin position="1"/>
        <end position="96"/>
    </location>
</feature>
<evidence type="ECO:0000255" key="1">
    <source>
        <dbReference type="HAMAP-Rule" id="MF_00122"/>
    </source>
</evidence>
<keyword id="KW-0067">ATP-binding</keyword>
<keyword id="KW-0436">Ligase</keyword>
<keyword id="KW-0547">Nucleotide-binding</keyword>
<keyword id="KW-0648">Protein biosynthesis</keyword>